<dbReference type="EC" id="6.3.4.4" evidence="1"/>
<dbReference type="EMBL" id="AM236080">
    <property type="protein sequence ID" value="CAK09258.1"/>
    <property type="molecule type" value="Genomic_DNA"/>
</dbReference>
<dbReference type="RefSeq" id="WP_011653210.1">
    <property type="nucleotide sequence ID" value="NC_008380.1"/>
</dbReference>
<dbReference type="SMR" id="Q1MCS2"/>
<dbReference type="EnsemblBacteria" id="CAK09258">
    <property type="protein sequence ID" value="CAK09258"/>
    <property type="gene ID" value="RL3768"/>
</dbReference>
<dbReference type="KEGG" id="rle:RL3768"/>
<dbReference type="eggNOG" id="COG0104">
    <property type="taxonomic scope" value="Bacteria"/>
</dbReference>
<dbReference type="HOGENOM" id="CLU_029848_0_0_5"/>
<dbReference type="UniPathway" id="UPA00075">
    <property type="reaction ID" value="UER00335"/>
</dbReference>
<dbReference type="Proteomes" id="UP000006575">
    <property type="component" value="Chromosome"/>
</dbReference>
<dbReference type="GO" id="GO:0005737">
    <property type="term" value="C:cytoplasm"/>
    <property type="evidence" value="ECO:0007669"/>
    <property type="project" value="UniProtKB-SubCell"/>
</dbReference>
<dbReference type="GO" id="GO:0004019">
    <property type="term" value="F:adenylosuccinate synthase activity"/>
    <property type="evidence" value="ECO:0007669"/>
    <property type="project" value="UniProtKB-UniRule"/>
</dbReference>
<dbReference type="GO" id="GO:0005525">
    <property type="term" value="F:GTP binding"/>
    <property type="evidence" value="ECO:0007669"/>
    <property type="project" value="UniProtKB-UniRule"/>
</dbReference>
<dbReference type="GO" id="GO:0000287">
    <property type="term" value="F:magnesium ion binding"/>
    <property type="evidence" value="ECO:0007669"/>
    <property type="project" value="UniProtKB-UniRule"/>
</dbReference>
<dbReference type="GO" id="GO:0044208">
    <property type="term" value="P:'de novo' AMP biosynthetic process"/>
    <property type="evidence" value="ECO:0007669"/>
    <property type="project" value="UniProtKB-UniRule"/>
</dbReference>
<dbReference type="GO" id="GO:0046040">
    <property type="term" value="P:IMP metabolic process"/>
    <property type="evidence" value="ECO:0007669"/>
    <property type="project" value="TreeGrafter"/>
</dbReference>
<dbReference type="CDD" id="cd03108">
    <property type="entry name" value="AdSS"/>
    <property type="match status" value="1"/>
</dbReference>
<dbReference type="FunFam" id="1.10.300.10:FF:000001">
    <property type="entry name" value="Adenylosuccinate synthetase"/>
    <property type="match status" value="1"/>
</dbReference>
<dbReference type="FunFam" id="3.90.170.10:FF:000001">
    <property type="entry name" value="Adenylosuccinate synthetase"/>
    <property type="match status" value="1"/>
</dbReference>
<dbReference type="Gene3D" id="3.40.440.10">
    <property type="entry name" value="Adenylosuccinate Synthetase, subunit A, domain 1"/>
    <property type="match status" value="1"/>
</dbReference>
<dbReference type="Gene3D" id="1.10.300.10">
    <property type="entry name" value="Adenylosuccinate Synthetase, subunit A, domain 2"/>
    <property type="match status" value="1"/>
</dbReference>
<dbReference type="Gene3D" id="3.90.170.10">
    <property type="entry name" value="Adenylosuccinate Synthetase, subunit A, domain 3"/>
    <property type="match status" value="1"/>
</dbReference>
<dbReference type="HAMAP" id="MF_00011">
    <property type="entry name" value="Adenylosucc_synth"/>
    <property type="match status" value="1"/>
</dbReference>
<dbReference type="InterPro" id="IPR018220">
    <property type="entry name" value="Adenylosuccin_syn_GTP-bd"/>
</dbReference>
<dbReference type="InterPro" id="IPR033128">
    <property type="entry name" value="Adenylosuccin_syn_Lys_AS"/>
</dbReference>
<dbReference type="InterPro" id="IPR042109">
    <property type="entry name" value="Adenylosuccinate_synth_dom1"/>
</dbReference>
<dbReference type="InterPro" id="IPR042110">
    <property type="entry name" value="Adenylosuccinate_synth_dom2"/>
</dbReference>
<dbReference type="InterPro" id="IPR042111">
    <property type="entry name" value="Adenylosuccinate_synth_dom3"/>
</dbReference>
<dbReference type="InterPro" id="IPR001114">
    <property type="entry name" value="Adenylosuccinate_synthetase"/>
</dbReference>
<dbReference type="InterPro" id="IPR027417">
    <property type="entry name" value="P-loop_NTPase"/>
</dbReference>
<dbReference type="NCBIfam" id="NF002223">
    <property type="entry name" value="PRK01117.1"/>
    <property type="match status" value="1"/>
</dbReference>
<dbReference type="NCBIfam" id="TIGR00184">
    <property type="entry name" value="purA"/>
    <property type="match status" value="1"/>
</dbReference>
<dbReference type="PANTHER" id="PTHR11846">
    <property type="entry name" value="ADENYLOSUCCINATE SYNTHETASE"/>
    <property type="match status" value="1"/>
</dbReference>
<dbReference type="PANTHER" id="PTHR11846:SF0">
    <property type="entry name" value="ADENYLOSUCCINATE SYNTHETASE"/>
    <property type="match status" value="1"/>
</dbReference>
<dbReference type="Pfam" id="PF00709">
    <property type="entry name" value="Adenylsucc_synt"/>
    <property type="match status" value="1"/>
</dbReference>
<dbReference type="SMART" id="SM00788">
    <property type="entry name" value="Adenylsucc_synt"/>
    <property type="match status" value="1"/>
</dbReference>
<dbReference type="SUPFAM" id="SSF52540">
    <property type="entry name" value="P-loop containing nucleoside triphosphate hydrolases"/>
    <property type="match status" value="1"/>
</dbReference>
<dbReference type="PROSITE" id="PS01266">
    <property type="entry name" value="ADENYLOSUCCIN_SYN_1"/>
    <property type="match status" value="1"/>
</dbReference>
<dbReference type="PROSITE" id="PS00513">
    <property type="entry name" value="ADENYLOSUCCIN_SYN_2"/>
    <property type="match status" value="1"/>
</dbReference>
<sequence length="432" mass="46466">MTNVVVVGSQWGDEGKGKIVDWLSERADIVVRYQGGHNAGHTLVIDGTSYKLSLLPSGVVRPGKMAVIGNGVVVDPHALIAEIGRLEAQGVTVTPDNLRIADNATLILSLHRELDAMREDAASNSGTKIGTTRRGIGPAYEDKVGRRAIRVMDLADLDSLSGKVDRILTHHNALRRGLGVAEVSHQAIMDELTSVADRVLPFRDTVWLFLDKERRKGSRILFEGAQGTLLDIDHGTYPFVTSSNTVAGQAAAGSGMGPGSLGYILGITKAYTTRVGEGPFPTELKDAIGEFLGEKGHEFGVVTGRKRRCGWFDAALVRQSIATNGITGIALTKLDVLDGLEELKICVGYMLDGEQIDHLPASQGAQARVEPIYITLEGWKESTVGARSWADLPAQAIKYVRQVEELIGAPVALLSTSPERDDTILVTDPFED</sequence>
<organism>
    <name type="scientific">Rhizobium johnstonii (strain DSM 114642 / LMG 32736 / 3841)</name>
    <name type="common">Rhizobium leguminosarum bv. viciae</name>
    <dbReference type="NCBI Taxonomy" id="216596"/>
    <lineage>
        <taxon>Bacteria</taxon>
        <taxon>Pseudomonadati</taxon>
        <taxon>Pseudomonadota</taxon>
        <taxon>Alphaproteobacteria</taxon>
        <taxon>Hyphomicrobiales</taxon>
        <taxon>Rhizobiaceae</taxon>
        <taxon>Rhizobium/Agrobacterium group</taxon>
        <taxon>Rhizobium</taxon>
        <taxon>Rhizobium johnstonii</taxon>
    </lineage>
</organism>
<reference key="1">
    <citation type="journal article" date="2006" name="Genome Biol.">
        <title>The genome of Rhizobium leguminosarum has recognizable core and accessory components.</title>
        <authorList>
            <person name="Young J.P.W."/>
            <person name="Crossman L.C."/>
            <person name="Johnston A.W.B."/>
            <person name="Thomson N.R."/>
            <person name="Ghazoui Z.F."/>
            <person name="Hull K.H."/>
            <person name="Wexler M."/>
            <person name="Curson A.R.J."/>
            <person name="Todd J.D."/>
            <person name="Poole P.S."/>
            <person name="Mauchline T.H."/>
            <person name="East A.K."/>
            <person name="Quail M.A."/>
            <person name="Churcher C."/>
            <person name="Arrowsmith C."/>
            <person name="Cherevach I."/>
            <person name="Chillingworth T."/>
            <person name="Clarke K."/>
            <person name="Cronin A."/>
            <person name="Davis P."/>
            <person name="Fraser A."/>
            <person name="Hance Z."/>
            <person name="Hauser H."/>
            <person name="Jagels K."/>
            <person name="Moule S."/>
            <person name="Mungall K."/>
            <person name="Norbertczak H."/>
            <person name="Rabbinowitsch E."/>
            <person name="Sanders M."/>
            <person name="Simmonds M."/>
            <person name="Whitehead S."/>
            <person name="Parkhill J."/>
        </authorList>
    </citation>
    <scope>NUCLEOTIDE SEQUENCE [LARGE SCALE GENOMIC DNA]</scope>
    <source>
        <strain>DSM 114642 / LMG 32736 / 3841</strain>
    </source>
</reference>
<proteinExistence type="inferred from homology"/>
<accession>Q1MCS2</accession>
<gene>
    <name evidence="1" type="primary">purA</name>
    <name type="ordered locus">RL3768</name>
</gene>
<name>PURA_RHIJ3</name>
<keyword id="KW-0963">Cytoplasm</keyword>
<keyword id="KW-0342">GTP-binding</keyword>
<keyword id="KW-0436">Ligase</keyword>
<keyword id="KW-0460">Magnesium</keyword>
<keyword id="KW-0479">Metal-binding</keyword>
<keyword id="KW-0547">Nucleotide-binding</keyword>
<keyword id="KW-0658">Purine biosynthesis</keyword>
<feature type="chain" id="PRO_1000000903" description="Adenylosuccinate synthetase">
    <location>
        <begin position="1"/>
        <end position="432"/>
    </location>
</feature>
<feature type="active site" description="Proton acceptor" evidence="1">
    <location>
        <position position="13"/>
    </location>
</feature>
<feature type="active site" description="Proton donor" evidence="1">
    <location>
        <position position="41"/>
    </location>
</feature>
<feature type="binding site" evidence="1">
    <location>
        <begin position="12"/>
        <end position="18"/>
    </location>
    <ligand>
        <name>GTP</name>
        <dbReference type="ChEBI" id="CHEBI:37565"/>
    </ligand>
</feature>
<feature type="binding site" description="in other chain" evidence="1">
    <location>
        <begin position="13"/>
        <end position="16"/>
    </location>
    <ligand>
        <name>IMP</name>
        <dbReference type="ChEBI" id="CHEBI:58053"/>
        <note>ligand shared between dimeric partners</note>
    </ligand>
</feature>
<feature type="binding site" evidence="1">
    <location>
        <position position="13"/>
    </location>
    <ligand>
        <name>Mg(2+)</name>
        <dbReference type="ChEBI" id="CHEBI:18420"/>
    </ligand>
</feature>
<feature type="binding site" description="in other chain" evidence="1">
    <location>
        <begin position="38"/>
        <end position="41"/>
    </location>
    <ligand>
        <name>IMP</name>
        <dbReference type="ChEBI" id="CHEBI:58053"/>
        <note>ligand shared between dimeric partners</note>
    </ligand>
</feature>
<feature type="binding site" evidence="1">
    <location>
        <begin position="40"/>
        <end position="42"/>
    </location>
    <ligand>
        <name>GTP</name>
        <dbReference type="ChEBI" id="CHEBI:37565"/>
    </ligand>
</feature>
<feature type="binding site" evidence="1">
    <location>
        <position position="40"/>
    </location>
    <ligand>
        <name>Mg(2+)</name>
        <dbReference type="ChEBI" id="CHEBI:18420"/>
    </ligand>
</feature>
<feature type="binding site" description="in other chain" evidence="1">
    <location>
        <position position="132"/>
    </location>
    <ligand>
        <name>IMP</name>
        <dbReference type="ChEBI" id="CHEBI:58053"/>
        <note>ligand shared between dimeric partners</note>
    </ligand>
</feature>
<feature type="binding site" evidence="1">
    <location>
        <position position="146"/>
    </location>
    <ligand>
        <name>IMP</name>
        <dbReference type="ChEBI" id="CHEBI:58053"/>
        <note>ligand shared between dimeric partners</note>
    </ligand>
</feature>
<feature type="binding site" description="in other chain" evidence="1">
    <location>
        <position position="226"/>
    </location>
    <ligand>
        <name>IMP</name>
        <dbReference type="ChEBI" id="CHEBI:58053"/>
        <note>ligand shared between dimeric partners</note>
    </ligand>
</feature>
<feature type="binding site" description="in other chain" evidence="1">
    <location>
        <position position="241"/>
    </location>
    <ligand>
        <name>IMP</name>
        <dbReference type="ChEBI" id="CHEBI:58053"/>
        <note>ligand shared between dimeric partners</note>
    </ligand>
</feature>
<feature type="binding site" evidence="1">
    <location>
        <begin position="301"/>
        <end position="307"/>
    </location>
    <ligand>
        <name>substrate</name>
    </ligand>
</feature>
<feature type="binding site" description="in other chain" evidence="1">
    <location>
        <position position="305"/>
    </location>
    <ligand>
        <name>IMP</name>
        <dbReference type="ChEBI" id="CHEBI:58053"/>
        <note>ligand shared between dimeric partners</note>
    </ligand>
</feature>
<feature type="binding site" evidence="1">
    <location>
        <position position="307"/>
    </location>
    <ligand>
        <name>GTP</name>
        <dbReference type="ChEBI" id="CHEBI:37565"/>
    </ligand>
</feature>
<feature type="binding site" evidence="1">
    <location>
        <begin position="333"/>
        <end position="335"/>
    </location>
    <ligand>
        <name>GTP</name>
        <dbReference type="ChEBI" id="CHEBI:37565"/>
    </ligand>
</feature>
<feature type="binding site" evidence="1">
    <location>
        <begin position="415"/>
        <end position="417"/>
    </location>
    <ligand>
        <name>GTP</name>
        <dbReference type="ChEBI" id="CHEBI:37565"/>
    </ligand>
</feature>
<evidence type="ECO:0000255" key="1">
    <source>
        <dbReference type="HAMAP-Rule" id="MF_00011"/>
    </source>
</evidence>
<comment type="function">
    <text evidence="1">Plays an important role in the de novo pathway of purine nucleotide biosynthesis. Catalyzes the first committed step in the biosynthesis of AMP from IMP.</text>
</comment>
<comment type="catalytic activity">
    <reaction evidence="1">
        <text>IMP + L-aspartate + GTP = N(6)-(1,2-dicarboxyethyl)-AMP + GDP + phosphate + 2 H(+)</text>
        <dbReference type="Rhea" id="RHEA:15753"/>
        <dbReference type="ChEBI" id="CHEBI:15378"/>
        <dbReference type="ChEBI" id="CHEBI:29991"/>
        <dbReference type="ChEBI" id="CHEBI:37565"/>
        <dbReference type="ChEBI" id="CHEBI:43474"/>
        <dbReference type="ChEBI" id="CHEBI:57567"/>
        <dbReference type="ChEBI" id="CHEBI:58053"/>
        <dbReference type="ChEBI" id="CHEBI:58189"/>
        <dbReference type="EC" id="6.3.4.4"/>
    </reaction>
</comment>
<comment type="cofactor">
    <cofactor evidence="1">
        <name>Mg(2+)</name>
        <dbReference type="ChEBI" id="CHEBI:18420"/>
    </cofactor>
    <text evidence="1">Binds 1 Mg(2+) ion per subunit.</text>
</comment>
<comment type="pathway">
    <text evidence="1">Purine metabolism; AMP biosynthesis via de novo pathway; AMP from IMP: step 1/2.</text>
</comment>
<comment type="subunit">
    <text evidence="1">Homodimer.</text>
</comment>
<comment type="subcellular location">
    <subcellularLocation>
        <location evidence="1">Cytoplasm</location>
    </subcellularLocation>
</comment>
<comment type="similarity">
    <text evidence="1">Belongs to the adenylosuccinate synthetase family.</text>
</comment>
<protein>
    <recommendedName>
        <fullName evidence="1">Adenylosuccinate synthetase</fullName>
        <shortName evidence="1">AMPSase</shortName>
        <shortName evidence="1">AdSS</shortName>
        <ecNumber evidence="1">6.3.4.4</ecNumber>
    </recommendedName>
    <alternativeName>
        <fullName evidence="1">IMP--aspartate ligase</fullName>
    </alternativeName>
</protein>